<name>MINE_BURO0</name>
<accession>B1JXA3</accession>
<comment type="function">
    <text evidence="1">Prevents the cell division inhibition by proteins MinC and MinD at internal division sites while permitting inhibition at polar sites. This ensures cell division at the proper site by restricting the formation of a division septum at the midpoint of the long axis of the cell.</text>
</comment>
<comment type="similarity">
    <text evidence="1">Belongs to the MinE family.</text>
</comment>
<dbReference type="EMBL" id="CP000958">
    <property type="protein sequence ID" value="ACA90122.1"/>
    <property type="molecule type" value="Genomic_DNA"/>
</dbReference>
<dbReference type="RefSeq" id="WP_006476634.1">
    <property type="nucleotide sequence ID" value="NC_010508.1"/>
</dbReference>
<dbReference type="SMR" id="B1JXA3"/>
<dbReference type="GeneID" id="93192778"/>
<dbReference type="KEGG" id="bcm:Bcenmc03_0945"/>
<dbReference type="HOGENOM" id="CLU_137929_2_1_4"/>
<dbReference type="Proteomes" id="UP000002169">
    <property type="component" value="Chromosome 1"/>
</dbReference>
<dbReference type="GO" id="GO:0051301">
    <property type="term" value="P:cell division"/>
    <property type="evidence" value="ECO:0007669"/>
    <property type="project" value="UniProtKB-KW"/>
</dbReference>
<dbReference type="GO" id="GO:0032955">
    <property type="term" value="P:regulation of division septum assembly"/>
    <property type="evidence" value="ECO:0007669"/>
    <property type="project" value="InterPro"/>
</dbReference>
<dbReference type="FunFam" id="3.30.1070.10:FF:000001">
    <property type="entry name" value="Cell division topological specificity factor"/>
    <property type="match status" value="1"/>
</dbReference>
<dbReference type="Gene3D" id="3.30.1070.10">
    <property type="entry name" value="Cell division topological specificity factor MinE"/>
    <property type="match status" value="1"/>
</dbReference>
<dbReference type="HAMAP" id="MF_00262">
    <property type="entry name" value="MinE"/>
    <property type="match status" value="1"/>
</dbReference>
<dbReference type="InterPro" id="IPR005527">
    <property type="entry name" value="MinE"/>
</dbReference>
<dbReference type="InterPro" id="IPR036707">
    <property type="entry name" value="MinE_sf"/>
</dbReference>
<dbReference type="NCBIfam" id="TIGR01215">
    <property type="entry name" value="minE"/>
    <property type="match status" value="1"/>
</dbReference>
<dbReference type="NCBIfam" id="NF001422">
    <property type="entry name" value="PRK00296.1"/>
    <property type="match status" value="1"/>
</dbReference>
<dbReference type="NCBIfam" id="NF010595">
    <property type="entry name" value="PRK13989.1"/>
    <property type="match status" value="1"/>
</dbReference>
<dbReference type="Pfam" id="PF03776">
    <property type="entry name" value="MinE"/>
    <property type="match status" value="1"/>
</dbReference>
<dbReference type="SUPFAM" id="SSF55229">
    <property type="entry name" value="Cell division protein MinE topological specificity domain"/>
    <property type="match status" value="1"/>
</dbReference>
<evidence type="ECO:0000255" key="1">
    <source>
        <dbReference type="HAMAP-Rule" id="MF_00262"/>
    </source>
</evidence>
<reference key="1">
    <citation type="submission" date="2008-02" db="EMBL/GenBank/DDBJ databases">
        <title>Complete sequence of chromosome 1 of Burkholderia cenocepacia MC0-3.</title>
        <authorList>
            <person name="Copeland A."/>
            <person name="Lucas S."/>
            <person name="Lapidus A."/>
            <person name="Barry K."/>
            <person name="Bruce D."/>
            <person name="Goodwin L."/>
            <person name="Glavina del Rio T."/>
            <person name="Dalin E."/>
            <person name="Tice H."/>
            <person name="Pitluck S."/>
            <person name="Chain P."/>
            <person name="Malfatti S."/>
            <person name="Shin M."/>
            <person name="Vergez L."/>
            <person name="Schmutz J."/>
            <person name="Larimer F."/>
            <person name="Land M."/>
            <person name="Hauser L."/>
            <person name="Kyrpides N."/>
            <person name="Mikhailova N."/>
            <person name="Tiedje J."/>
            <person name="Richardson P."/>
        </authorList>
    </citation>
    <scope>NUCLEOTIDE SEQUENCE [LARGE SCALE GENOMIC DNA]</scope>
    <source>
        <strain>MC0-3</strain>
    </source>
</reference>
<keyword id="KW-0131">Cell cycle</keyword>
<keyword id="KW-0132">Cell division</keyword>
<protein>
    <recommendedName>
        <fullName evidence="1">Cell division topological specificity factor</fullName>
    </recommendedName>
</protein>
<organism>
    <name type="scientific">Burkholderia orbicola (strain MC0-3)</name>
    <dbReference type="NCBI Taxonomy" id="406425"/>
    <lineage>
        <taxon>Bacteria</taxon>
        <taxon>Pseudomonadati</taxon>
        <taxon>Pseudomonadota</taxon>
        <taxon>Betaproteobacteria</taxon>
        <taxon>Burkholderiales</taxon>
        <taxon>Burkholderiaceae</taxon>
        <taxon>Burkholderia</taxon>
        <taxon>Burkholderia cepacia complex</taxon>
        <taxon>Burkholderia orbicola</taxon>
    </lineage>
</organism>
<sequence>MSILSFLLGEKKKSASVAKERLQLIIAHERVGGRPPADYLPALQKELVAVISKYVHISDDDIRVSLERQDDLEVLEVKIEIPQA</sequence>
<gene>
    <name evidence="1" type="primary">minE</name>
    <name type="ordered locus">Bcenmc03_0945</name>
</gene>
<feature type="chain" id="PRO_1000114205" description="Cell division topological specificity factor">
    <location>
        <begin position="1"/>
        <end position="84"/>
    </location>
</feature>
<proteinExistence type="inferred from homology"/>